<evidence type="ECO:0000255" key="1"/>
<evidence type="ECO:0000256" key="2">
    <source>
        <dbReference type="SAM" id="MobiDB-lite"/>
    </source>
</evidence>
<evidence type="ECO:0000269" key="3">
    <source>
    </source>
</evidence>
<feature type="signal peptide" evidence="1">
    <location>
        <begin position="1"/>
        <end position="27"/>
    </location>
</feature>
<feature type="chain" id="PRO_0000014271" description="Matrix non-peptidase homolog 1">
    <location>
        <begin position="28"/>
        <end position="781"/>
    </location>
</feature>
<feature type="region of interest" description="Disordered" evidence="2">
    <location>
        <begin position="63"/>
        <end position="113"/>
    </location>
</feature>
<feature type="compositionally biased region" description="Low complexity" evidence="2">
    <location>
        <begin position="63"/>
        <end position="94"/>
    </location>
</feature>
<feature type="glycosylation site" description="N-linked (GlcNAc...) asparagine" evidence="1">
    <location>
        <position position="54"/>
    </location>
</feature>
<feature type="glycosylation site" description="N-linked (GlcNAc...) asparagine" evidence="1">
    <location>
        <position position="183"/>
    </location>
</feature>
<feature type="glycosylation site" description="N-linked (GlcNAc...) asparagine" evidence="1">
    <location>
        <position position="341"/>
    </location>
</feature>
<feature type="glycosylation site" description="N-linked (GlcNAc...) asparagine" evidence="1">
    <location>
        <position position="375"/>
    </location>
</feature>
<feature type="glycosylation site" description="N-linked (GlcNAc...) asparagine" evidence="3">
    <location>
        <position position="520"/>
    </location>
</feature>
<organism>
    <name type="scientific">Caenorhabditis elegans</name>
    <dbReference type="NCBI Taxonomy" id="6239"/>
    <lineage>
        <taxon>Eukaryota</taxon>
        <taxon>Metazoa</taxon>
        <taxon>Ecdysozoa</taxon>
        <taxon>Nematoda</taxon>
        <taxon>Chromadorea</taxon>
        <taxon>Rhabditida</taxon>
        <taxon>Rhabditina</taxon>
        <taxon>Rhabditomorpha</taxon>
        <taxon>Rhabditoidea</taxon>
        <taxon>Rhabditidae</taxon>
        <taxon>Peloderinae</taxon>
        <taxon>Caenorhabditis</taxon>
    </lineage>
</organism>
<reference key="1">
    <citation type="journal article" date="1998" name="Science">
        <title>Genome sequence of the nematode C. elegans: a platform for investigating biology.</title>
        <authorList>
            <consortium name="The C. elegans sequencing consortium"/>
        </authorList>
    </citation>
    <scope>NUCLEOTIDE SEQUENCE [LARGE SCALE GENOMIC DNA]</scope>
    <source>
        <strain>Bristol N2</strain>
    </source>
</reference>
<reference key="2">
    <citation type="journal article" date="2007" name="Mol. Cell. Proteomics">
        <title>Proteomics reveals N-linked glycoprotein diversity in Caenorhabditis elegans and suggests an atypical translocation mechanism for integral membrane proteins.</title>
        <authorList>
            <person name="Kaji H."/>
            <person name="Kamiie J."/>
            <person name="Kawakami H."/>
            <person name="Kido K."/>
            <person name="Yamauchi Y."/>
            <person name="Shinkawa T."/>
            <person name="Taoka M."/>
            <person name="Takahashi N."/>
            <person name="Isobe T."/>
        </authorList>
    </citation>
    <scope>GLYCOSYLATION [LARGE SCALE ANALYSIS] AT ASN-520</scope>
    <scope>IDENTIFICATION BY MASS SPECTROMETRY</scope>
    <source>
        <strain>Bristol N2</strain>
    </source>
</reference>
<dbReference type="EMBL" id="Z34533">
    <property type="protein sequence ID" value="CAA84298.1"/>
    <property type="molecule type" value="Genomic_DNA"/>
</dbReference>
<dbReference type="PIR" id="T18693">
    <property type="entry name" value="T18693"/>
</dbReference>
<dbReference type="RefSeq" id="NP_497878.1">
    <property type="nucleotide sequence ID" value="NM_065477.6"/>
</dbReference>
<dbReference type="SMR" id="P46557"/>
<dbReference type="BioGRID" id="40800">
    <property type="interactions" value="3"/>
</dbReference>
<dbReference type="FunCoup" id="P46557">
    <property type="interactions" value="123"/>
</dbReference>
<dbReference type="STRING" id="6239.B0285.7.1"/>
<dbReference type="GlyCosmos" id="P46557">
    <property type="glycosylation" value="5 sites, No reported glycans"/>
</dbReference>
<dbReference type="iPTMnet" id="P46557"/>
<dbReference type="PaxDb" id="6239-B0285.7"/>
<dbReference type="PeptideAtlas" id="P46557"/>
<dbReference type="EnsemblMetazoa" id="B0285.7.1">
    <property type="protein sequence ID" value="B0285.7.1"/>
    <property type="gene ID" value="WBGene00007139"/>
</dbReference>
<dbReference type="GeneID" id="175564"/>
<dbReference type="KEGG" id="cel:CELE_B0285.7"/>
<dbReference type="UCSC" id="B0285.7">
    <property type="organism name" value="c. elegans"/>
</dbReference>
<dbReference type="AGR" id="WB:WBGene00007139"/>
<dbReference type="CTD" id="175564"/>
<dbReference type="WormBase" id="B0285.7">
    <property type="protein sequence ID" value="CE00646"/>
    <property type="gene ID" value="WBGene00007139"/>
    <property type="gene designation" value="mnp-1"/>
</dbReference>
<dbReference type="eggNOG" id="KOG1046">
    <property type="taxonomic scope" value="Eukaryota"/>
</dbReference>
<dbReference type="HOGENOM" id="CLU_358721_0_0_1"/>
<dbReference type="InParanoid" id="P46557"/>
<dbReference type="OMA" id="TISDWAS"/>
<dbReference type="OrthoDB" id="10031169at2759"/>
<dbReference type="PhylomeDB" id="P46557"/>
<dbReference type="PRO" id="PR:P46557"/>
<dbReference type="Proteomes" id="UP000001940">
    <property type="component" value="Chromosome III"/>
</dbReference>
<dbReference type="Bgee" id="WBGene00007139">
    <property type="expression patterns" value="Expressed in embryo and 3 other cell types or tissues"/>
</dbReference>
<dbReference type="GO" id="GO:0005737">
    <property type="term" value="C:cytoplasm"/>
    <property type="evidence" value="ECO:0000318"/>
    <property type="project" value="GO_Central"/>
</dbReference>
<dbReference type="GO" id="GO:0005615">
    <property type="term" value="C:extracellular space"/>
    <property type="evidence" value="ECO:0000318"/>
    <property type="project" value="GO_Central"/>
</dbReference>
<dbReference type="GO" id="GO:0016020">
    <property type="term" value="C:membrane"/>
    <property type="evidence" value="ECO:0000318"/>
    <property type="project" value="GO_Central"/>
</dbReference>
<dbReference type="Gene3D" id="1.10.390.10">
    <property type="entry name" value="Neutral Protease Domain 2"/>
    <property type="match status" value="1"/>
</dbReference>
<dbReference type="Gene3D" id="2.60.40.1730">
    <property type="entry name" value="tricorn interacting facor f3 domain"/>
    <property type="match status" value="1"/>
</dbReference>
<dbReference type="InterPro" id="IPR045357">
    <property type="entry name" value="Aminopeptidase_N-like_N"/>
</dbReference>
<dbReference type="InterPro" id="IPR042097">
    <property type="entry name" value="Aminopeptidase_N-like_N_sf"/>
</dbReference>
<dbReference type="InterPro" id="IPR050344">
    <property type="entry name" value="Peptidase_M1_aminopeptidases"/>
</dbReference>
<dbReference type="InterPro" id="IPR027268">
    <property type="entry name" value="Peptidase_M4/M1_CTD_sf"/>
</dbReference>
<dbReference type="PANTHER" id="PTHR11533">
    <property type="entry name" value="PROTEASE M1 ZINC METALLOPROTEASE"/>
    <property type="match status" value="1"/>
</dbReference>
<dbReference type="PANTHER" id="PTHR11533:SF294">
    <property type="entry name" value="THYROTROPIN-RELEASING HORMONE-DEGRADING ECTOENZYME"/>
    <property type="match status" value="1"/>
</dbReference>
<dbReference type="Pfam" id="PF17900">
    <property type="entry name" value="Peptidase_M1_N"/>
    <property type="match status" value="1"/>
</dbReference>
<dbReference type="SUPFAM" id="SSF63737">
    <property type="entry name" value="Leukotriene A4 hydrolase N-terminal domain"/>
    <property type="match status" value="1"/>
</dbReference>
<dbReference type="SUPFAM" id="SSF55486">
    <property type="entry name" value="Metalloproteases ('zincins'), catalytic domain"/>
    <property type="match status" value="1"/>
</dbReference>
<name>MNP1_CAEEL</name>
<protein>
    <recommendedName>
        <fullName>Matrix non-peptidase homolog 1</fullName>
    </recommendedName>
</protein>
<keyword id="KW-0325">Glycoprotein</keyword>
<keyword id="KW-1185">Reference proteome</keyword>
<keyword id="KW-0732">Signal</keyword>
<accession>P46557</accession>
<proteinExistence type="evidence at protein level"/>
<gene>
    <name type="primary">mnp-1</name>
    <name type="ORF">B0285.7</name>
</gene>
<sequence>MTPPPASPSKKAKSSWLLIALIAVIIGIILCAGVITFLTLFNKNGDGPDMDWQNATEVPLTTTSKATVSTTTTQSATTPSTTTTRIEETTTTTSGAFDESVKNSEASTSTIPTTEAVPTTTATDAPEIVMPVDVASILKDKTKDFEIVEKCAEIQALPVSCTPSQSPLTSDPSKFQPIHYVLNITIRDVRKPVLEGHMQLFASTKDQVQAISLHSVKIHNLENRDRIHVVNCNTGETICVSRVHQIDDLIHLELAQSISSGVNLRVDIDGFISADSGPHVFKQIPTAKWRVPQMIGSVFEPTSARHVFPSFDLHNQKSTFNLCLNHGPSMSAIANSLINPNVSTSGISCFEKTVPLIAQQLSFVAFEKTNPLFYNTTTMDGAYLPEIDMIFNLNAKNFKQYEWIHSEVSKVMALMSKWSGFSYPLTRLEIVVAPVQAGHSALGVITLPAQAIAYQKHTSTHETLIKEVIGQWMEGVVTTEHTCFEKALIAYVEWKINEELQIVKKTRKMEVSKIRPRNLNETADSVRVLRQIKSQSSNLCSPRFVEVFYTLDETYGQETVIGMIRVIFDKFAFSTATISDWASAAETATGGRPEAGALIHQWYRPSSTISRPVLRAVVSSNSVEFNQLTEETWTVPLEISGSAGTQLAVISEKKQAIPFVSSDYVVVDAGRKSHAFVVYDADTYLRLIRCFGDSRCPSKEIGGIFSDLGAALLANILPKPENQDVAKWKSVFKFMAQQNIVEGTAACCVEHAIREMRKCSYWDIQDVCTKIDFNIVLAAVA</sequence>